<name>AROK_PSYCK</name>
<evidence type="ECO:0000255" key="1">
    <source>
        <dbReference type="HAMAP-Rule" id="MF_00109"/>
    </source>
</evidence>
<dbReference type="EC" id="2.7.1.71" evidence="1"/>
<dbReference type="EMBL" id="CP000323">
    <property type="protein sequence ID" value="ABE75945.1"/>
    <property type="molecule type" value="Genomic_DNA"/>
</dbReference>
<dbReference type="RefSeq" id="WP_011514481.1">
    <property type="nucleotide sequence ID" value="NC_007969.1"/>
</dbReference>
<dbReference type="SMR" id="Q1Q8Q8"/>
<dbReference type="STRING" id="335284.Pcryo_2168"/>
<dbReference type="KEGG" id="pcr:Pcryo_2168"/>
<dbReference type="eggNOG" id="COG0703">
    <property type="taxonomic scope" value="Bacteria"/>
</dbReference>
<dbReference type="HOGENOM" id="CLU_057607_2_2_6"/>
<dbReference type="UniPathway" id="UPA00053">
    <property type="reaction ID" value="UER00088"/>
</dbReference>
<dbReference type="Proteomes" id="UP000002425">
    <property type="component" value="Chromosome"/>
</dbReference>
<dbReference type="GO" id="GO:0005829">
    <property type="term" value="C:cytosol"/>
    <property type="evidence" value="ECO:0007669"/>
    <property type="project" value="TreeGrafter"/>
</dbReference>
<dbReference type="GO" id="GO:0005524">
    <property type="term" value="F:ATP binding"/>
    <property type="evidence" value="ECO:0007669"/>
    <property type="project" value="UniProtKB-UniRule"/>
</dbReference>
<dbReference type="GO" id="GO:0000287">
    <property type="term" value="F:magnesium ion binding"/>
    <property type="evidence" value="ECO:0007669"/>
    <property type="project" value="UniProtKB-UniRule"/>
</dbReference>
<dbReference type="GO" id="GO:0004765">
    <property type="term" value="F:shikimate kinase activity"/>
    <property type="evidence" value="ECO:0007669"/>
    <property type="project" value="UniProtKB-UniRule"/>
</dbReference>
<dbReference type="GO" id="GO:0008652">
    <property type="term" value="P:amino acid biosynthetic process"/>
    <property type="evidence" value="ECO:0007669"/>
    <property type="project" value="UniProtKB-KW"/>
</dbReference>
<dbReference type="GO" id="GO:0009073">
    <property type="term" value="P:aromatic amino acid family biosynthetic process"/>
    <property type="evidence" value="ECO:0007669"/>
    <property type="project" value="UniProtKB-KW"/>
</dbReference>
<dbReference type="GO" id="GO:0009423">
    <property type="term" value="P:chorismate biosynthetic process"/>
    <property type="evidence" value="ECO:0007669"/>
    <property type="project" value="UniProtKB-UniRule"/>
</dbReference>
<dbReference type="CDD" id="cd00464">
    <property type="entry name" value="SK"/>
    <property type="match status" value="1"/>
</dbReference>
<dbReference type="Gene3D" id="3.40.50.300">
    <property type="entry name" value="P-loop containing nucleotide triphosphate hydrolases"/>
    <property type="match status" value="1"/>
</dbReference>
<dbReference type="HAMAP" id="MF_00109">
    <property type="entry name" value="Shikimate_kinase"/>
    <property type="match status" value="1"/>
</dbReference>
<dbReference type="InterPro" id="IPR027417">
    <property type="entry name" value="P-loop_NTPase"/>
</dbReference>
<dbReference type="InterPro" id="IPR031322">
    <property type="entry name" value="Shikimate/glucono_kinase"/>
</dbReference>
<dbReference type="InterPro" id="IPR000623">
    <property type="entry name" value="Shikimate_kinase/TSH1"/>
</dbReference>
<dbReference type="InterPro" id="IPR023000">
    <property type="entry name" value="Shikimate_kinase_CS"/>
</dbReference>
<dbReference type="NCBIfam" id="NF003456">
    <property type="entry name" value="PRK05057.1"/>
    <property type="match status" value="1"/>
</dbReference>
<dbReference type="PANTHER" id="PTHR21087">
    <property type="entry name" value="SHIKIMATE KINASE"/>
    <property type="match status" value="1"/>
</dbReference>
<dbReference type="PANTHER" id="PTHR21087:SF21">
    <property type="entry name" value="SHIKIMATE KINASE 2"/>
    <property type="match status" value="1"/>
</dbReference>
<dbReference type="Pfam" id="PF01202">
    <property type="entry name" value="SKI"/>
    <property type="match status" value="1"/>
</dbReference>
<dbReference type="PRINTS" id="PR01100">
    <property type="entry name" value="SHIKIMTKNASE"/>
</dbReference>
<dbReference type="SUPFAM" id="SSF52540">
    <property type="entry name" value="P-loop containing nucleoside triphosphate hydrolases"/>
    <property type="match status" value="1"/>
</dbReference>
<dbReference type="PROSITE" id="PS01128">
    <property type="entry name" value="SHIKIMATE_KINASE"/>
    <property type="match status" value="1"/>
</dbReference>
<organism>
    <name type="scientific">Psychrobacter cryohalolentis (strain ATCC BAA-1226 / DSM 17306 / VKM B-2378 / K5)</name>
    <dbReference type="NCBI Taxonomy" id="335284"/>
    <lineage>
        <taxon>Bacteria</taxon>
        <taxon>Pseudomonadati</taxon>
        <taxon>Pseudomonadota</taxon>
        <taxon>Gammaproteobacteria</taxon>
        <taxon>Moraxellales</taxon>
        <taxon>Moraxellaceae</taxon>
        <taxon>Psychrobacter</taxon>
    </lineage>
</organism>
<comment type="function">
    <text evidence="1">Catalyzes the specific phosphorylation of the 3-hydroxyl group of shikimic acid using ATP as a cosubstrate.</text>
</comment>
<comment type="catalytic activity">
    <reaction evidence="1">
        <text>shikimate + ATP = 3-phosphoshikimate + ADP + H(+)</text>
        <dbReference type="Rhea" id="RHEA:13121"/>
        <dbReference type="ChEBI" id="CHEBI:15378"/>
        <dbReference type="ChEBI" id="CHEBI:30616"/>
        <dbReference type="ChEBI" id="CHEBI:36208"/>
        <dbReference type="ChEBI" id="CHEBI:145989"/>
        <dbReference type="ChEBI" id="CHEBI:456216"/>
        <dbReference type="EC" id="2.7.1.71"/>
    </reaction>
</comment>
<comment type="cofactor">
    <cofactor evidence="1">
        <name>Mg(2+)</name>
        <dbReference type="ChEBI" id="CHEBI:18420"/>
    </cofactor>
    <text evidence="1">Binds 1 Mg(2+) ion per subunit.</text>
</comment>
<comment type="pathway">
    <text evidence="1">Metabolic intermediate biosynthesis; chorismate biosynthesis; chorismate from D-erythrose 4-phosphate and phosphoenolpyruvate: step 5/7.</text>
</comment>
<comment type="subunit">
    <text evidence="1">Monomer.</text>
</comment>
<comment type="subcellular location">
    <subcellularLocation>
        <location evidence="1">Cytoplasm</location>
    </subcellularLocation>
</comment>
<comment type="similarity">
    <text evidence="1">Belongs to the shikimate kinase family.</text>
</comment>
<proteinExistence type="inferred from homology"/>
<sequence length="186" mass="20771">MVEELPSVFLVGPMGAGKTTIGRLLAKQLGRSFVDSDWYIESQTGADIAWIFAKEGEAGFRERETRAIDELTQQPQIVLATGGGAVMAAENREYLKQRGIVIYLNAPVDVQMARTAKDKSRPLLQQPNPRKILQGLYSARDPLYREVAHIIMPTGHTYPRHMVNQLLQQLNSFCISTSVDSEPEKD</sequence>
<gene>
    <name evidence="1" type="primary">aroK</name>
    <name type="ordered locus">Pcryo_2168</name>
</gene>
<protein>
    <recommendedName>
        <fullName evidence="1">Shikimate kinase</fullName>
        <shortName evidence="1">SK</shortName>
        <ecNumber evidence="1">2.7.1.71</ecNumber>
    </recommendedName>
</protein>
<keyword id="KW-0028">Amino-acid biosynthesis</keyword>
<keyword id="KW-0057">Aromatic amino acid biosynthesis</keyword>
<keyword id="KW-0067">ATP-binding</keyword>
<keyword id="KW-0963">Cytoplasm</keyword>
<keyword id="KW-0418">Kinase</keyword>
<keyword id="KW-0460">Magnesium</keyword>
<keyword id="KW-0479">Metal-binding</keyword>
<keyword id="KW-0547">Nucleotide-binding</keyword>
<keyword id="KW-0808">Transferase</keyword>
<reference key="1">
    <citation type="submission" date="2006-03" db="EMBL/GenBank/DDBJ databases">
        <title>Complete sequence of chromosome of Psychrobacter cryohalolentis K5.</title>
        <authorList>
            <consortium name="US DOE Joint Genome Institute"/>
            <person name="Copeland A."/>
            <person name="Lucas S."/>
            <person name="Lapidus A."/>
            <person name="Barry K."/>
            <person name="Detter J.C."/>
            <person name="Glavina T."/>
            <person name="Hammon N."/>
            <person name="Israni S."/>
            <person name="Dalin E."/>
            <person name="Tice H."/>
            <person name="Pitluck S."/>
            <person name="Brettin T."/>
            <person name="Bruce D."/>
            <person name="Han C."/>
            <person name="Tapia R."/>
            <person name="Sims D.R."/>
            <person name="Gilna P."/>
            <person name="Schmutz J."/>
            <person name="Larimer F."/>
            <person name="Land M."/>
            <person name="Hauser L."/>
            <person name="Kyrpides N."/>
            <person name="Kim E."/>
            <person name="Richardson P."/>
        </authorList>
    </citation>
    <scope>NUCLEOTIDE SEQUENCE [LARGE SCALE GENOMIC DNA]</scope>
    <source>
        <strain>ATCC BAA-1226 / DSM 17306 / VKM B-2378 / K5</strain>
    </source>
</reference>
<feature type="chain" id="PRO_1000022989" description="Shikimate kinase">
    <location>
        <begin position="1"/>
        <end position="186"/>
    </location>
</feature>
<feature type="binding site" evidence="1">
    <location>
        <begin position="15"/>
        <end position="20"/>
    </location>
    <ligand>
        <name>ATP</name>
        <dbReference type="ChEBI" id="CHEBI:30616"/>
    </ligand>
</feature>
<feature type="binding site" evidence="1">
    <location>
        <position position="19"/>
    </location>
    <ligand>
        <name>Mg(2+)</name>
        <dbReference type="ChEBI" id="CHEBI:18420"/>
    </ligand>
</feature>
<feature type="binding site" evidence="1">
    <location>
        <position position="37"/>
    </location>
    <ligand>
        <name>substrate</name>
    </ligand>
</feature>
<feature type="binding site" evidence="1">
    <location>
        <position position="61"/>
    </location>
    <ligand>
        <name>substrate</name>
    </ligand>
</feature>
<feature type="binding site" evidence="1">
    <location>
        <position position="83"/>
    </location>
    <ligand>
        <name>substrate</name>
    </ligand>
</feature>
<feature type="binding site" evidence="1">
    <location>
        <position position="121"/>
    </location>
    <ligand>
        <name>ATP</name>
        <dbReference type="ChEBI" id="CHEBI:30616"/>
    </ligand>
</feature>
<feature type="binding site" evidence="1">
    <location>
        <position position="140"/>
    </location>
    <ligand>
        <name>substrate</name>
    </ligand>
</feature>
<accession>Q1Q8Q8</accession>